<accession>A9VZF3</accession>
<organism>
    <name type="scientific">Methylorubrum extorquens (strain PA1)</name>
    <name type="common">Methylobacterium extorquens</name>
    <dbReference type="NCBI Taxonomy" id="419610"/>
    <lineage>
        <taxon>Bacteria</taxon>
        <taxon>Pseudomonadati</taxon>
        <taxon>Pseudomonadota</taxon>
        <taxon>Alphaproteobacteria</taxon>
        <taxon>Hyphomicrobiales</taxon>
        <taxon>Methylobacteriaceae</taxon>
        <taxon>Methylorubrum</taxon>
    </lineage>
</organism>
<evidence type="ECO:0000255" key="1">
    <source>
        <dbReference type="HAMAP-Rule" id="MF_00435"/>
    </source>
</evidence>
<evidence type="ECO:0000255" key="2">
    <source>
        <dbReference type="PROSITE-ProRule" id="PRU01197"/>
    </source>
</evidence>
<evidence type="ECO:0000255" key="3">
    <source>
        <dbReference type="PROSITE-ProRule" id="PRU01198"/>
    </source>
</evidence>
<reference key="1">
    <citation type="submission" date="2007-12" db="EMBL/GenBank/DDBJ databases">
        <title>Complete sequence of Methylobacterium extorquens PA1.</title>
        <authorList>
            <consortium name="US DOE Joint Genome Institute"/>
            <person name="Copeland A."/>
            <person name="Lucas S."/>
            <person name="Lapidus A."/>
            <person name="Barry K."/>
            <person name="Glavina del Rio T."/>
            <person name="Dalin E."/>
            <person name="Tice H."/>
            <person name="Pitluck S."/>
            <person name="Saunders E."/>
            <person name="Brettin T."/>
            <person name="Bruce D."/>
            <person name="Detter J.C."/>
            <person name="Han C."/>
            <person name="Schmutz J."/>
            <person name="Larimer F."/>
            <person name="Land M."/>
            <person name="Hauser L."/>
            <person name="Kyrpides N."/>
            <person name="Kim E."/>
            <person name="Marx C."/>
            <person name="Richardson P."/>
        </authorList>
    </citation>
    <scope>NUCLEOTIDE SEQUENCE [LARGE SCALE GENOMIC DNA]</scope>
    <source>
        <strain>PA1</strain>
    </source>
</reference>
<sequence length="339" mass="36843">MRVYYDRDADLNLIKGKNVVIVGYGSQGHAHALNLRDSGVKDIVIALREGSATAKKAEHEGFKVMNVADAAKWGDVVMMLTPDELQGDIYKESLEPNMKQGAALLFAHGLNVHFNLIEPRKDLDVLMVAPKGPGHTVRGEYLKGGGVPTLIAIAQDASGNAHDLGLSYASANGGGRAGIIETTFKEECETDLFGEQAVLCGGLVELIKAGFETLVEAGYAPEMAYFECLHEVKLIVDLIYEGGIANMNYSISNTAEYGEYVTGPRIVTPETKAEMKRVLNDIQSGIFTRNWMLENKVGQTSFKATRAKLAAHPIEEVGAKLRGMMPWISEKALVDKTKN</sequence>
<comment type="function">
    <text evidence="1">Involved in the biosynthesis of branched-chain amino acids (BCAA). Catalyzes an alkyl-migration followed by a ketol-acid reduction of (S)-2-acetolactate (S2AL) to yield (R)-2,3-dihydroxy-isovalerate. In the isomerase reaction, S2AL is rearranged via a Mg-dependent methyl migration to produce 3-hydroxy-3-methyl-2-ketobutyrate (HMKB). In the reductase reaction, this 2-ketoacid undergoes a metal-dependent reduction by NADPH to yield (R)-2,3-dihydroxy-isovalerate.</text>
</comment>
<comment type="catalytic activity">
    <reaction evidence="1">
        <text>(2R)-2,3-dihydroxy-3-methylbutanoate + NADP(+) = (2S)-2-acetolactate + NADPH + H(+)</text>
        <dbReference type="Rhea" id="RHEA:22068"/>
        <dbReference type="ChEBI" id="CHEBI:15378"/>
        <dbReference type="ChEBI" id="CHEBI:49072"/>
        <dbReference type="ChEBI" id="CHEBI:57783"/>
        <dbReference type="ChEBI" id="CHEBI:58349"/>
        <dbReference type="ChEBI" id="CHEBI:58476"/>
        <dbReference type="EC" id="1.1.1.86"/>
    </reaction>
</comment>
<comment type="catalytic activity">
    <reaction evidence="1">
        <text>(2R,3R)-2,3-dihydroxy-3-methylpentanoate + NADP(+) = (S)-2-ethyl-2-hydroxy-3-oxobutanoate + NADPH + H(+)</text>
        <dbReference type="Rhea" id="RHEA:13493"/>
        <dbReference type="ChEBI" id="CHEBI:15378"/>
        <dbReference type="ChEBI" id="CHEBI:49256"/>
        <dbReference type="ChEBI" id="CHEBI:49258"/>
        <dbReference type="ChEBI" id="CHEBI:57783"/>
        <dbReference type="ChEBI" id="CHEBI:58349"/>
        <dbReference type="EC" id="1.1.1.86"/>
    </reaction>
</comment>
<comment type="cofactor">
    <cofactor evidence="1">
        <name>Mg(2+)</name>
        <dbReference type="ChEBI" id="CHEBI:18420"/>
    </cofactor>
    <text evidence="1">Binds 2 magnesium ions per subunit.</text>
</comment>
<comment type="pathway">
    <text evidence="1">Amino-acid biosynthesis; L-isoleucine biosynthesis; L-isoleucine from 2-oxobutanoate: step 2/4.</text>
</comment>
<comment type="pathway">
    <text evidence="1">Amino-acid biosynthesis; L-valine biosynthesis; L-valine from pyruvate: step 2/4.</text>
</comment>
<comment type="similarity">
    <text evidence="1">Belongs to the ketol-acid reductoisomerase family.</text>
</comment>
<name>ILVC_METEP</name>
<gene>
    <name evidence="1" type="primary">ilvC</name>
    <name type="ordered locus">Mext_0285</name>
</gene>
<keyword id="KW-0028">Amino-acid biosynthesis</keyword>
<keyword id="KW-0100">Branched-chain amino acid biosynthesis</keyword>
<keyword id="KW-0460">Magnesium</keyword>
<keyword id="KW-0479">Metal-binding</keyword>
<keyword id="KW-0521">NADP</keyword>
<keyword id="KW-0560">Oxidoreductase</keyword>
<feature type="chain" id="PRO_1000124307" description="Ketol-acid reductoisomerase (NADP(+))">
    <location>
        <begin position="1"/>
        <end position="339"/>
    </location>
</feature>
<feature type="domain" description="KARI N-terminal Rossmann" evidence="2">
    <location>
        <begin position="1"/>
        <end position="182"/>
    </location>
</feature>
<feature type="domain" description="KARI C-terminal knotted" evidence="3">
    <location>
        <begin position="183"/>
        <end position="328"/>
    </location>
</feature>
<feature type="active site" evidence="1">
    <location>
        <position position="108"/>
    </location>
</feature>
<feature type="binding site" evidence="1">
    <location>
        <begin position="24"/>
        <end position="27"/>
    </location>
    <ligand>
        <name>NADP(+)</name>
        <dbReference type="ChEBI" id="CHEBI:58349"/>
    </ligand>
</feature>
<feature type="binding site" evidence="1">
    <location>
        <position position="48"/>
    </location>
    <ligand>
        <name>NADP(+)</name>
        <dbReference type="ChEBI" id="CHEBI:58349"/>
    </ligand>
</feature>
<feature type="binding site" evidence="1">
    <location>
        <position position="51"/>
    </location>
    <ligand>
        <name>NADP(+)</name>
        <dbReference type="ChEBI" id="CHEBI:58349"/>
    </ligand>
</feature>
<feature type="binding site" evidence="1">
    <location>
        <position position="53"/>
    </location>
    <ligand>
        <name>NADP(+)</name>
        <dbReference type="ChEBI" id="CHEBI:58349"/>
    </ligand>
</feature>
<feature type="binding site" evidence="1">
    <location>
        <begin position="83"/>
        <end position="86"/>
    </location>
    <ligand>
        <name>NADP(+)</name>
        <dbReference type="ChEBI" id="CHEBI:58349"/>
    </ligand>
</feature>
<feature type="binding site" evidence="1">
    <location>
        <position position="134"/>
    </location>
    <ligand>
        <name>NADP(+)</name>
        <dbReference type="ChEBI" id="CHEBI:58349"/>
    </ligand>
</feature>
<feature type="binding site" evidence="1">
    <location>
        <position position="191"/>
    </location>
    <ligand>
        <name>Mg(2+)</name>
        <dbReference type="ChEBI" id="CHEBI:18420"/>
        <label>1</label>
    </ligand>
</feature>
<feature type="binding site" evidence="1">
    <location>
        <position position="191"/>
    </location>
    <ligand>
        <name>Mg(2+)</name>
        <dbReference type="ChEBI" id="CHEBI:18420"/>
        <label>2</label>
    </ligand>
</feature>
<feature type="binding site" evidence="1">
    <location>
        <position position="195"/>
    </location>
    <ligand>
        <name>Mg(2+)</name>
        <dbReference type="ChEBI" id="CHEBI:18420"/>
        <label>1</label>
    </ligand>
</feature>
<feature type="binding site" evidence="1">
    <location>
        <position position="227"/>
    </location>
    <ligand>
        <name>Mg(2+)</name>
        <dbReference type="ChEBI" id="CHEBI:18420"/>
        <label>2</label>
    </ligand>
</feature>
<feature type="binding site" evidence="1">
    <location>
        <position position="231"/>
    </location>
    <ligand>
        <name>Mg(2+)</name>
        <dbReference type="ChEBI" id="CHEBI:18420"/>
        <label>2</label>
    </ligand>
</feature>
<feature type="binding site" evidence="1">
    <location>
        <position position="252"/>
    </location>
    <ligand>
        <name>substrate</name>
    </ligand>
</feature>
<proteinExistence type="inferred from homology"/>
<dbReference type="EC" id="1.1.1.86" evidence="1"/>
<dbReference type="EMBL" id="CP000908">
    <property type="protein sequence ID" value="ABY28709.1"/>
    <property type="molecule type" value="Genomic_DNA"/>
</dbReference>
<dbReference type="RefSeq" id="WP_003597269.1">
    <property type="nucleotide sequence ID" value="NC_010172.1"/>
</dbReference>
<dbReference type="SMR" id="A9VZF3"/>
<dbReference type="KEGG" id="mex:Mext_0285"/>
<dbReference type="eggNOG" id="COG0059">
    <property type="taxonomic scope" value="Bacteria"/>
</dbReference>
<dbReference type="HOGENOM" id="CLU_033821_0_1_5"/>
<dbReference type="BioCyc" id="MEXT419610:MEXT_RS01385-MONOMER"/>
<dbReference type="UniPathway" id="UPA00047">
    <property type="reaction ID" value="UER00056"/>
</dbReference>
<dbReference type="UniPathway" id="UPA00049">
    <property type="reaction ID" value="UER00060"/>
</dbReference>
<dbReference type="GO" id="GO:0005829">
    <property type="term" value="C:cytosol"/>
    <property type="evidence" value="ECO:0007669"/>
    <property type="project" value="TreeGrafter"/>
</dbReference>
<dbReference type="GO" id="GO:0004455">
    <property type="term" value="F:ketol-acid reductoisomerase activity"/>
    <property type="evidence" value="ECO:0007669"/>
    <property type="project" value="UniProtKB-UniRule"/>
</dbReference>
<dbReference type="GO" id="GO:0000287">
    <property type="term" value="F:magnesium ion binding"/>
    <property type="evidence" value="ECO:0007669"/>
    <property type="project" value="UniProtKB-UniRule"/>
</dbReference>
<dbReference type="GO" id="GO:0050661">
    <property type="term" value="F:NADP binding"/>
    <property type="evidence" value="ECO:0007669"/>
    <property type="project" value="InterPro"/>
</dbReference>
<dbReference type="GO" id="GO:0009097">
    <property type="term" value="P:isoleucine biosynthetic process"/>
    <property type="evidence" value="ECO:0007669"/>
    <property type="project" value="UniProtKB-UniRule"/>
</dbReference>
<dbReference type="GO" id="GO:0009099">
    <property type="term" value="P:L-valine biosynthetic process"/>
    <property type="evidence" value="ECO:0007669"/>
    <property type="project" value="UniProtKB-UniRule"/>
</dbReference>
<dbReference type="FunFam" id="3.40.50.720:FF:000023">
    <property type="entry name" value="Ketol-acid reductoisomerase (NADP(+))"/>
    <property type="match status" value="1"/>
</dbReference>
<dbReference type="Gene3D" id="6.10.240.10">
    <property type="match status" value="1"/>
</dbReference>
<dbReference type="Gene3D" id="3.40.50.720">
    <property type="entry name" value="NAD(P)-binding Rossmann-like Domain"/>
    <property type="match status" value="1"/>
</dbReference>
<dbReference type="HAMAP" id="MF_00435">
    <property type="entry name" value="IlvC"/>
    <property type="match status" value="1"/>
</dbReference>
<dbReference type="InterPro" id="IPR008927">
    <property type="entry name" value="6-PGluconate_DH-like_C_sf"/>
</dbReference>
<dbReference type="InterPro" id="IPR013023">
    <property type="entry name" value="KARI"/>
</dbReference>
<dbReference type="InterPro" id="IPR000506">
    <property type="entry name" value="KARI_C"/>
</dbReference>
<dbReference type="InterPro" id="IPR013116">
    <property type="entry name" value="KARI_N"/>
</dbReference>
<dbReference type="InterPro" id="IPR014359">
    <property type="entry name" value="KARI_prok"/>
</dbReference>
<dbReference type="InterPro" id="IPR036291">
    <property type="entry name" value="NAD(P)-bd_dom_sf"/>
</dbReference>
<dbReference type="NCBIfam" id="TIGR00465">
    <property type="entry name" value="ilvC"/>
    <property type="match status" value="1"/>
</dbReference>
<dbReference type="NCBIfam" id="NF004017">
    <property type="entry name" value="PRK05479.1"/>
    <property type="match status" value="1"/>
</dbReference>
<dbReference type="NCBIfam" id="NF009940">
    <property type="entry name" value="PRK13403.1"/>
    <property type="match status" value="1"/>
</dbReference>
<dbReference type="PANTHER" id="PTHR21371">
    <property type="entry name" value="KETOL-ACID REDUCTOISOMERASE, MITOCHONDRIAL"/>
    <property type="match status" value="1"/>
</dbReference>
<dbReference type="PANTHER" id="PTHR21371:SF1">
    <property type="entry name" value="KETOL-ACID REDUCTOISOMERASE, MITOCHONDRIAL"/>
    <property type="match status" value="1"/>
</dbReference>
<dbReference type="Pfam" id="PF01450">
    <property type="entry name" value="KARI_C"/>
    <property type="match status" value="1"/>
</dbReference>
<dbReference type="Pfam" id="PF07991">
    <property type="entry name" value="KARI_N"/>
    <property type="match status" value="1"/>
</dbReference>
<dbReference type="PIRSF" id="PIRSF000116">
    <property type="entry name" value="IlvC_gammaproteo"/>
    <property type="match status" value="1"/>
</dbReference>
<dbReference type="SUPFAM" id="SSF48179">
    <property type="entry name" value="6-phosphogluconate dehydrogenase C-terminal domain-like"/>
    <property type="match status" value="1"/>
</dbReference>
<dbReference type="SUPFAM" id="SSF51735">
    <property type="entry name" value="NAD(P)-binding Rossmann-fold domains"/>
    <property type="match status" value="1"/>
</dbReference>
<dbReference type="PROSITE" id="PS51851">
    <property type="entry name" value="KARI_C"/>
    <property type="match status" value="1"/>
</dbReference>
<dbReference type="PROSITE" id="PS51850">
    <property type="entry name" value="KARI_N"/>
    <property type="match status" value="1"/>
</dbReference>
<protein>
    <recommendedName>
        <fullName evidence="1">Ketol-acid reductoisomerase (NADP(+))</fullName>
        <shortName evidence="1">KARI</shortName>
        <ecNumber evidence="1">1.1.1.86</ecNumber>
    </recommendedName>
    <alternativeName>
        <fullName evidence="1">Acetohydroxy-acid isomeroreductase</fullName>
        <shortName evidence="1">AHIR</shortName>
    </alternativeName>
    <alternativeName>
        <fullName evidence="1">Alpha-keto-beta-hydroxylacyl reductoisomerase</fullName>
    </alternativeName>
    <alternativeName>
        <fullName evidence="1">Ketol-acid reductoisomerase type 1</fullName>
    </alternativeName>
    <alternativeName>
        <fullName evidence="1">Ketol-acid reductoisomerase type I</fullName>
    </alternativeName>
</protein>